<feature type="chain" id="PRO_1000075951" description="Shikimate kinase">
    <location>
        <begin position="1"/>
        <end position="176"/>
    </location>
</feature>
<feature type="binding site" evidence="1">
    <location>
        <begin position="14"/>
        <end position="19"/>
    </location>
    <ligand>
        <name>ATP</name>
        <dbReference type="ChEBI" id="CHEBI:30616"/>
    </ligand>
</feature>
<feature type="binding site" evidence="1">
    <location>
        <position position="18"/>
    </location>
    <ligand>
        <name>Mg(2+)</name>
        <dbReference type="ChEBI" id="CHEBI:18420"/>
    </ligand>
</feature>
<feature type="binding site" evidence="1">
    <location>
        <position position="36"/>
    </location>
    <ligand>
        <name>substrate</name>
    </ligand>
</feature>
<feature type="binding site" evidence="1">
    <location>
        <position position="60"/>
    </location>
    <ligand>
        <name>substrate</name>
    </ligand>
</feature>
<feature type="binding site" evidence="1">
    <location>
        <position position="83"/>
    </location>
    <ligand>
        <name>substrate</name>
    </ligand>
</feature>
<feature type="binding site" evidence="1">
    <location>
        <position position="121"/>
    </location>
    <ligand>
        <name>ATP</name>
        <dbReference type="ChEBI" id="CHEBI:30616"/>
    </ligand>
</feature>
<feature type="binding site" evidence="1">
    <location>
        <position position="140"/>
    </location>
    <ligand>
        <name>substrate</name>
    </ligand>
</feature>
<organism>
    <name type="scientific">Francisella philomiragia subsp. philomiragia (strain ATCC 25017 / CCUG 19701 / FSC 153 / O#319-036)</name>
    <dbReference type="NCBI Taxonomy" id="484022"/>
    <lineage>
        <taxon>Bacteria</taxon>
        <taxon>Pseudomonadati</taxon>
        <taxon>Pseudomonadota</taxon>
        <taxon>Gammaproteobacteria</taxon>
        <taxon>Thiotrichales</taxon>
        <taxon>Francisellaceae</taxon>
        <taxon>Francisella</taxon>
    </lineage>
</organism>
<keyword id="KW-0028">Amino-acid biosynthesis</keyword>
<keyword id="KW-0057">Aromatic amino acid biosynthesis</keyword>
<keyword id="KW-0067">ATP-binding</keyword>
<keyword id="KW-0963">Cytoplasm</keyword>
<keyword id="KW-0418">Kinase</keyword>
<keyword id="KW-0460">Magnesium</keyword>
<keyword id="KW-0479">Metal-binding</keyword>
<keyword id="KW-0547">Nucleotide-binding</keyword>
<keyword id="KW-0808">Transferase</keyword>
<evidence type="ECO:0000255" key="1">
    <source>
        <dbReference type="HAMAP-Rule" id="MF_00109"/>
    </source>
</evidence>
<proteinExistence type="inferred from homology"/>
<gene>
    <name evidence="1" type="primary">aroK</name>
    <name type="ordered locus">Fphi_0005</name>
</gene>
<sequence>MIRTKNIFLIGPVGAGKSTIGKQLAKQLKLEFIDSDDTIEKKCGVDINWIFDLEGEEGFRKRERDVIAEILAEKQNIVLATGGGAILDPDTRSLLSSRGKVVYLEATIEQQLERTAKDTKRPLLRVDDKKPVLEQLMAEREPLYRSIADVVVETNGATVKNIVNKISTFLVEETIL</sequence>
<reference key="1">
    <citation type="submission" date="2007-12" db="EMBL/GenBank/DDBJ databases">
        <title>Complete sequence of chromosome of Francisella philomiragia subsp. philomiragia ATCC 25017.</title>
        <authorList>
            <consortium name="US DOE Joint Genome Institute"/>
            <person name="Copeland A."/>
            <person name="Lucas S."/>
            <person name="Lapidus A."/>
            <person name="Barry K."/>
            <person name="Detter J.C."/>
            <person name="Glavina del Rio T."/>
            <person name="Hammon N."/>
            <person name="Israni S."/>
            <person name="Dalin E."/>
            <person name="Tice H."/>
            <person name="Pitluck S."/>
            <person name="Chain P."/>
            <person name="Malfatti S."/>
            <person name="Shin M."/>
            <person name="Vergez L."/>
            <person name="Schmutz J."/>
            <person name="Larimer F."/>
            <person name="Land M."/>
            <person name="Hauser L."/>
            <person name="Richardson P."/>
        </authorList>
    </citation>
    <scope>NUCLEOTIDE SEQUENCE [LARGE SCALE GENOMIC DNA]</scope>
    <source>
        <strain>ATCC 25017 / CCUG 19701 / FSC 153 / O#319-036</strain>
    </source>
</reference>
<accession>B0TXQ6</accession>
<comment type="function">
    <text evidence="1">Catalyzes the specific phosphorylation of the 3-hydroxyl group of shikimic acid using ATP as a cosubstrate.</text>
</comment>
<comment type="catalytic activity">
    <reaction evidence="1">
        <text>shikimate + ATP = 3-phosphoshikimate + ADP + H(+)</text>
        <dbReference type="Rhea" id="RHEA:13121"/>
        <dbReference type="ChEBI" id="CHEBI:15378"/>
        <dbReference type="ChEBI" id="CHEBI:30616"/>
        <dbReference type="ChEBI" id="CHEBI:36208"/>
        <dbReference type="ChEBI" id="CHEBI:145989"/>
        <dbReference type="ChEBI" id="CHEBI:456216"/>
        <dbReference type="EC" id="2.7.1.71"/>
    </reaction>
</comment>
<comment type="cofactor">
    <cofactor evidence="1">
        <name>Mg(2+)</name>
        <dbReference type="ChEBI" id="CHEBI:18420"/>
    </cofactor>
    <text evidence="1">Binds 1 Mg(2+) ion per subunit.</text>
</comment>
<comment type="pathway">
    <text evidence="1">Metabolic intermediate biosynthesis; chorismate biosynthesis; chorismate from D-erythrose 4-phosphate and phosphoenolpyruvate: step 5/7.</text>
</comment>
<comment type="subunit">
    <text evidence="1">Monomer.</text>
</comment>
<comment type="subcellular location">
    <subcellularLocation>
        <location evidence="1">Cytoplasm</location>
    </subcellularLocation>
</comment>
<comment type="similarity">
    <text evidence="1">Belongs to the shikimate kinase family.</text>
</comment>
<name>AROK_FRAP2</name>
<protein>
    <recommendedName>
        <fullName evidence="1">Shikimate kinase</fullName>
        <shortName evidence="1">SK</shortName>
        <ecNumber evidence="1">2.7.1.71</ecNumber>
    </recommendedName>
</protein>
<dbReference type="EC" id="2.7.1.71" evidence="1"/>
<dbReference type="EMBL" id="CP000937">
    <property type="protein sequence ID" value="ABZ86225.1"/>
    <property type="molecule type" value="Genomic_DNA"/>
</dbReference>
<dbReference type="SMR" id="B0TXQ6"/>
<dbReference type="KEGG" id="fph:Fphi_0005"/>
<dbReference type="eggNOG" id="COG0703">
    <property type="taxonomic scope" value="Bacteria"/>
</dbReference>
<dbReference type="HOGENOM" id="CLU_057607_2_2_6"/>
<dbReference type="UniPathway" id="UPA00053">
    <property type="reaction ID" value="UER00088"/>
</dbReference>
<dbReference type="GO" id="GO:0005829">
    <property type="term" value="C:cytosol"/>
    <property type="evidence" value="ECO:0007669"/>
    <property type="project" value="TreeGrafter"/>
</dbReference>
<dbReference type="GO" id="GO:0005524">
    <property type="term" value="F:ATP binding"/>
    <property type="evidence" value="ECO:0007669"/>
    <property type="project" value="UniProtKB-UniRule"/>
</dbReference>
<dbReference type="GO" id="GO:0000287">
    <property type="term" value="F:magnesium ion binding"/>
    <property type="evidence" value="ECO:0007669"/>
    <property type="project" value="UniProtKB-UniRule"/>
</dbReference>
<dbReference type="GO" id="GO:0004765">
    <property type="term" value="F:shikimate kinase activity"/>
    <property type="evidence" value="ECO:0007669"/>
    <property type="project" value="UniProtKB-UniRule"/>
</dbReference>
<dbReference type="GO" id="GO:0008652">
    <property type="term" value="P:amino acid biosynthetic process"/>
    <property type="evidence" value="ECO:0007669"/>
    <property type="project" value="UniProtKB-KW"/>
</dbReference>
<dbReference type="GO" id="GO:0009073">
    <property type="term" value="P:aromatic amino acid family biosynthetic process"/>
    <property type="evidence" value="ECO:0007669"/>
    <property type="project" value="UniProtKB-KW"/>
</dbReference>
<dbReference type="GO" id="GO:0009423">
    <property type="term" value="P:chorismate biosynthetic process"/>
    <property type="evidence" value="ECO:0007669"/>
    <property type="project" value="UniProtKB-UniRule"/>
</dbReference>
<dbReference type="CDD" id="cd00464">
    <property type="entry name" value="SK"/>
    <property type="match status" value="1"/>
</dbReference>
<dbReference type="Gene3D" id="3.40.50.300">
    <property type="entry name" value="P-loop containing nucleotide triphosphate hydrolases"/>
    <property type="match status" value="1"/>
</dbReference>
<dbReference type="HAMAP" id="MF_00109">
    <property type="entry name" value="Shikimate_kinase"/>
    <property type="match status" value="1"/>
</dbReference>
<dbReference type="InterPro" id="IPR027417">
    <property type="entry name" value="P-loop_NTPase"/>
</dbReference>
<dbReference type="InterPro" id="IPR031322">
    <property type="entry name" value="Shikimate/glucono_kinase"/>
</dbReference>
<dbReference type="InterPro" id="IPR000623">
    <property type="entry name" value="Shikimate_kinase/TSH1"/>
</dbReference>
<dbReference type="InterPro" id="IPR023000">
    <property type="entry name" value="Shikimate_kinase_CS"/>
</dbReference>
<dbReference type="NCBIfam" id="NF003456">
    <property type="entry name" value="PRK05057.1"/>
    <property type="match status" value="1"/>
</dbReference>
<dbReference type="PANTHER" id="PTHR21087">
    <property type="entry name" value="SHIKIMATE KINASE"/>
    <property type="match status" value="1"/>
</dbReference>
<dbReference type="PANTHER" id="PTHR21087:SF16">
    <property type="entry name" value="SHIKIMATE KINASE 1, CHLOROPLASTIC"/>
    <property type="match status" value="1"/>
</dbReference>
<dbReference type="Pfam" id="PF01202">
    <property type="entry name" value="SKI"/>
    <property type="match status" value="1"/>
</dbReference>
<dbReference type="PRINTS" id="PR01100">
    <property type="entry name" value="SHIKIMTKNASE"/>
</dbReference>
<dbReference type="SUPFAM" id="SSF52540">
    <property type="entry name" value="P-loop containing nucleoside triphosphate hydrolases"/>
    <property type="match status" value="1"/>
</dbReference>
<dbReference type="PROSITE" id="PS01128">
    <property type="entry name" value="SHIKIMATE_KINASE"/>
    <property type="match status" value="1"/>
</dbReference>